<dbReference type="EC" id="2.3.1.-" evidence="7"/>
<dbReference type="EMBL" id="EQ963487">
    <property type="protein sequence ID" value="EED44780.1"/>
    <property type="molecule type" value="Genomic_DNA"/>
</dbReference>
<dbReference type="RefSeq" id="XP_002385535.1">
    <property type="nucleotide sequence ID" value="XM_002385494.1"/>
</dbReference>
<dbReference type="SMR" id="B8NYX0"/>
<dbReference type="STRING" id="332952.B8NYX0"/>
<dbReference type="EnsemblFungi" id="EED44780">
    <property type="protein sequence ID" value="EED44780"/>
    <property type="gene ID" value="AFLA_114820"/>
</dbReference>
<dbReference type="VEuPathDB" id="FungiDB:AFLA_008622"/>
<dbReference type="VEuPathDB" id="FungiDB:AFLA_012951"/>
<dbReference type="VEuPathDB" id="FungiDB:AFLA_012952"/>
<dbReference type="eggNOG" id="KOG1202">
    <property type="taxonomic scope" value="Eukaryota"/>
</dbReference>
<dbReference type="HOGENOM" id="CLU_000022_16_6_1"/>
<dbReference type="OMA" id="WGSWGEV"/>
<dbReference type="GO" id="GO:0004315">
    <property type="term" value="F:3-oxoacyl-[acyl-carrier-protein] synthase activity"/>
    <property type="evidence" value="ECO:0007669"/>
    <property type="project" value="InterPro"/>
</dbReference>
<dbReference type="GO" id="GO:0004312">
    <property type="term" value="F:fatty acid synthase activity"/>
    <property type="evidence" value="ECO:0007669"/>
    <property type="project" value="TreeGrafter"/>
</dbReference>
<dbReference type="GO" id="GO:0016491">
    <property type="term" value="F:oxidoreductase activity"/>
    <property type="evidence" value="ECO:0007669"/>
    <property type="project" value="UniProtKB-KW"/>
</dbReference>
<dbReference type="GO" id="GO:0031177">
    <property type="term" value="F:phosphopantetheine binding"/>
    <property type="evidence" value="ECO:0007669"/>
    <property type="project" value="InterPro"/>
</dbReference>
<dbReference type="GO" id="GO:0006633">
    <property type="term" value="P:fatty acid biosynthetic process"/>
    <property type="evidence" value="ECO:0007669"/>
    <property type="project" value="InterPro"/>
</dbReference>
<dbReference type="GO" id="GO:0044550">
    <property type="term" value="P:secondary metabolite biosynthetic process"/>
    <property type="evidence" value="ECO:0007669"/>
    <property type="project" value="TreeGrafter"/>
</dbReference>
<dbReference type="CDD" id="cd05274">
    <property type="entry name" value="KR_FAS_SDR_x"/>
    <property type="match status" value="1"/>
</dbReference>
<dbReference type="CDD" id="cd00833">
    <property type="entry name" value="PKS"/>
    <property type="match status" value="1"/>
</dbReference>
<dbReference type="Gene3D" id="3.40.47.10">
    <property type="match status" value="1"/>
</dbReference>
<dbReference type="Gene3D" id="1.10.1200.10">
    <property type="entry name" value="ACP-like"/>
    <property type="match status" value="1"/>
</dbReference>
<dbReference type="Gene3D" id="3.40.366.10">
    <property type="entry name" value="Malonyl-Coenzyme A Acyl Carrier Protein, domain 2"/>
    <property type="match status" value="1"/>
</dbReference>
<dbReference type="Gene3D" id="3.40.50.720">
    <property type="entry name" value="NAD(P)-binding Rossmann-like Domain"/>
    <property type="match status" value="1"/>
</dbReference>
<dbReference type="InterPro" id="IPR001227">
    <property type="entry name" value="Ac_transferase_dom_sf"/>
</dbReference>
<dbReference type="InterPro" id="IPR036736">
    <property type="entry name" value="ACP-like_sf"/>
</dbReference>
<dbReference type="InterPro" id="IPR014043">
    <property type="entry name" value="Acyl_transferase_dom"/>
</dbReference>
<dbReference type="InterPro" id="IPR016035">
    <property type="entry name" value="Acyl_Trfase/lysoPLipase"/>
</dbReference>
<dbReference type="InterPro" id="IPR018201">
    <property type="entry name" value="Ketoacyl_synth_AS"/>
</dbReference>
<dbReference type="InterPro" id="IPR014031">
    <property type="entry name" value="Ketoacyl_synth_C"/>
</dbReference>
<dbReference type="InterPro" id="IPR014030">
    <property type="entry name" value="Ketoacyl_synth_N"/>
</dbReference>
<dbReference type="InterPro" id="IPR016036">
    <property type="entry name" value="Malonyl_transacylase_ACP-bd"/>
</dbReference>
<dbReference type="InterPro" id="IPR036291">
    <property type="entry name" value="NAD(P)-bd_dom_sf"/>
</dbReference>
<dbReference type="InterPro" id="IPR020841">
    <property type="entry name" value="PKS_Beta-ketoAc_synthase_dom"/>
</dbReference>
<dbReference type="InterPro" id="IPR013968">
    <property type="entry name" value="PKS_KR"/>
</dbReference>
<dbReference type="InterPro" id="IPR050091">
    <property type="entry name" value="PKS_NRPS_Biosynth_Enz"/>
</dbReference>
<dbReference type="InterPro" id="IPR020806">
    <property type="entry name" value="PKS_PP-bd"/>
</dbReference>
<dbReference type="InterPro" id="IPR009081">
    <property type="entry name" value="PP-bd_ACP"/>
</dbReference>
<dbReference type="InterPro" id="IPR016039">
    <property type="entry name" value="Thiolase-like"/>
</dbReference>
<dbReference type="PANTHER" id="PTHR43775">
    <property type="entry name" value="FATTY ACID SYNTHASE"/>
    <property type="match status" value="1"/>
</dbReference>
<dbReference type="PANTHER" id="PTHR43775:SF22">
    <property type="entry name" value="SYNTHASE, PUTATIVE (JCVI)-RELATED"/>
    <property type="match status" value="1"/>
</dbReference>
<dbReference type="Pfam" id="PF00698">
    <property type="entry name" value="Acyl_transf_1"/>
    <property type="match status" value="1"/>
</dbReference>
<dbReference type="Pfam" id="PF22621">
    <property type="entry name" value="CurL-like_PKS_C"/>
    <property type="match status" value="1"/>
</dbReference>
<dbReference type="Pfam" id="PF00109">
    <property type="entry name" value="ketoacyl-synt"/>
    <property type="match status" value="1"/>
</dbReference>
<dbReference type="Pfam" id="PF02801">
    <property type="entry name" value="Ketoacyl-synt_C"/>
    <property type="match status" value="1"/>
</dbReference>
<dbReference type="Pfam" id="PF08659">
    <property type="entry name" value="KR"/>
    <property type="match status" value="1"/>
</dbReference>
<dbReference type="Pfam" id="PF00550">
    <property type="entry name" value="PP-binding"/>
    <property type="match status" value="1"/>
</dbReference>
<dbReference type="SMART" id="SM00827">
    <property type="entry name" value="PKS_AT"/>
    <property type="match status" value="1"/>
</dbReference>
<dbReference type="SMART" id="SM00822">
    <property type="entry name" value="PKS_KR"/>
    <property type="match status" value="1"/>
</dbReference>
<dbReference type="SMART" id="SM00825">
    <property type="entry name" value="PKS_KS"/>
    <property type="match status" value="1"/>
</dbReference>
<dbReference type="SMART" id="SM00823">
    <property type="entry name" value="PKS_PP"/>
    <property type="match status" value="1"/>
</dbReference>
<dbReference type="SMART" id="SM01294">
    <property type="entry name" value="PKS_PP_betabranch"/>
    <property type="match status" value="1"/>
</dbReference>
<dbReference type="SUPFAM" id="SSF47336">
    <property type="entry name" value="ACP-like"/>
    <property type="match status" value="1"/>
</dbReference>
<dbReference type="SUPFAM" id="SSF52151">
    <property type="entry name" value="FabD/lysophospholipase-like"/>
    <property type="match status" value="1"/>
</dbReference>
<dbReference type="SUPFAM" id="SSF51735">
    <property type="entry name" value="NAD(P)-binding Rossmann-fold domains"/>
    <property type="match status" value="1"/>
</dbReference>
<dbReference type="SUPFAM" id="SSF55048">
    <property type="entry name" value="Probable ACP-binding domain of malonyl-CoA ACP transacylase"/>
    <property type="match status" value="1"/>
</dbReference>
<dbReference type="SUPFAM" id="SSF53901">
    <property type="entry name" value="Thiolase-like"/>
    <property type="match status" value="1"/>
</dbReference>
<dbReference type="PROSITE" id="PS50075">
    <property type="entry name" value="CARRIER"/>
    <property type="match status" value="1"/>
</dbReference>
<dbReference type="PROSITE" id="PS00606">
    <property type="entry name" value="KS3_1"/>
    <property type="match status" value="1"/>
</dbReference>
<dbReference type="PROSITE" id="PS52004">
    <property type="entry name" value="KS3_2"/>
    <property type="match status" value="1"/>
</dbReference>
<keyword id="KW-0511">Multifunctional enzyme</keyword>
<keyword id="KW-0560">Oxidoreductase</keyword>
<keyword id="KW-0596">Phosphopantetheine</keyword>
<keyword id="KW-0597">Phosphoprotein</keyword>
<keyword id="KW-0808">Transferase</keyword>
<sequence>MEANDSPHDVAVVGMGCRLPGNNNTPEELWRSILQKVDASSEIPRMRWEPYQQNAQNARSIGKVPRRGYFVKNLENFDAGFFNISPKEAEQMDPQQRLVLEVTWEALENAGIPLSSLSGSDAAVFMGVNSDDYGKLLLEDLPHVEPWMGIGTAYCGVANRISYHLNLMGPSTAVDAACASSLVAIHLGRQAILSGESKVAIVGGVNAIFGPGLTSVLDKAGALSSDGRCHSFDDAASGYGRGEGAAVVILKNMAEAVKDGDHILATLKGTAVAQDGRTNGIMAPNQKAQELVARKALDVARVDASTIDYVEAHATSTPVGDPTEVSAISAVYGKGRSPDKPCYIGSVKPNVGHLEAGAGAVGFIKAVMSVQKGILPPQANLKTLNTRVNWSEGVQVVQDIEDWPSSGYPRRAGVCSYGYGGTVSHAIIEKYIQTGPAIYSKEQWPKGTQVLLLSSPQRRSLETQAATQAEWMSTVGKQNDLRCVAATLGTRRSHHKYRAAFVVESHDDAAEKLNAFACQTPTKWTTSGGKPEGDDRPVVWVFSGHGAQWTDMAKDLLQYRVFRDVIESVDILVQKEMGFSAIQAMEMGVLNGSDQVQVLTYLMQIGLSEVLRSLGVSCGAVIGHSVGEIAASVAAGCITPAEGTLIVTRRAKLYRRFMGAGGMALVCAPLEQITIEISTQNVNNLVVAINSSPSSCVVSGPKEEIEAFALNLNNKGIKTIHVDTDIAFHHPMLGELMEPLAEALVGYVSPSQSKVAIYSTSASDPRSTMDRGIRYWLDNMVNPVQLTSAISAAAEDASPLAPIIKKILSMESRGATIQAIAIDISSHDAASQLSSRIDDLCFPPIRGVVHAAGVLHNEHVLSVTPDSFERVLAPKIAGSLTLNMLFPPKTVDFMVLFSSCGQFFGFPGQASYASGNAFLDALATYRRSQGDNTIAMQWTSWREIGMAAGSEFVRAELATKGITDISQEEAFQAWMHVSKYDVDHAVVLRSRALEKHEPLPSPLLVDIAIHKISSILTPPPTPPLSASSDLLPLPRNPADRFDSLSRQVRECVANVLQMETDEVASQEPLSNMGMDSVMTVHLRGRLQKSLGVLVPPNLTWSHPSIDHIVKWLMEKTNDKE</sequence>
<name>FLUP_ASPFN</name>
<evidence type="ECO:0000255" key="1"/>
<evidence type="ECO:0000255" key="2">
    <source>
        <dbReference type="PROSITE-ProRule" id="PRU00258"/>
    </source>
</evidence>
<evidence type="ECO:0000255" key="3">
    <source>
        <dbReference type="PROSITE-ProRule" id="PRU01348"/>
    </source>
</evidence>
<evidence type="ECO:0000255" key="4">
    <source>
        <dbReference type="PROSITE-ProRule" id="PRU10022"/>
    </source>
</evidence>
<evidence type="ECO:0000269" key="5">
    <source>
    </source>
</evidence>
<evidence type="ECO:0000303" key="6">
    <source>
    </source>
</evidence>
<evidence type="ECO:0000305" key="7">
    <source>
    </source>
</evidence>
<reference key="1">
    <citation type="journal article" date="2015" name="Genome Announc.">
        <title>Genome sequence of Aspergillus flavus NRRL 3357, a strain that causes aflatoxin contamination of food and feed.</title>
        <authorList>
            <person name="Nierman W.C."/>
            <person name="Yu J."/>
            <person name="Fedorova-Abrams N.D."/>
            <person name="Losada L."/>
            <person name="Cleveland T.E."/>
            <person name="Bhatnagar D."/>
            <person name="Bennett J.W."/>
            <person name="Dean R."/>
            <person name="Payne G.A."/>
        </authorList>
    </citation>
    <scope>NUCLEOTIDE SEQUENCE [LARGE SCALE GENOMIC DNA]</scope>
    <source>
        <strain>ATCC 200026 / FGSC A1120 / IAM 13836 / NRRL 3357 / JCM 12722 / SRRC 167</strain>
    </source>
</reference>
<reference key="2">
    <citation type="journal article" date="2010" name="Mol. Plant Pathol.">
        <title>Beyond aflatoxin: four distinct expression patterns and functional roles associated with Aspergillus flavus secondary metabolism gene clusters.</title>
        <authorList>
            <person name="Georgianna D.R."/>
            <person name="Fedorova N.D."/>
            <person name="Burroughs J.L."/>
            <person name="Dolezal A.L."/>
            <person name="Bok J.W."/>
            <person name="Horowitz-Brown S."/>
            <person name="Woloshuk C.P."/>
            <person name="Yu J."/>
            <person name="Keller N.P."/>
            <person name="Payne G.A."/>
        </authorList>
    </citation>
    <scope>IDENTIFICATION OF THE GENE CLUSTER 41</scope>
</reference>
<reference key="3">
    <citation type="journal article" date="2016" name="Fungal Biol.">
        <title>The Aspergillus flavus fluP-associated metabolite promotes sclerotial production.</title>
        <authorList>
            <person name="Chang P.K."/>
            <person name="Scharfenstein L.L."/>
            <person name="Ehrlich K.C."/>
            <person name="Diana Di Mavungu J."/>
        </authorList>
    </citation>
    <scope>FUNCTION</scope>
    <scope>DISRUPTION PHENOTYPE</scope>
    <scope>INDUCTION</scope>
</reference>
<organism>
    <name type="scientific">Aspergillus flavus (strain ATCC 200026 / FGSC A1120 / IAM 13836 / NRRL 3357 / JCM 12722 / SRRC 167)</name>
    <dbReference type="NCBI Taxonomy" id="332952"/>
    <lineage>
        <taxon>Eukaryota</taxon>
        <taxon>Fungi</taxon>
        <taxon>Dikarya</taxon>
        <taxon>Ascomycota</taxon>
        <taxon>Pezizomycotina</taxon>
        <taxon>Eurotiomycetes</taxon>
        <taxon>Eurotiomycetidae</taxon>
        <taxon>Eurotiales</taxon>
        <taxon>Aspergillaceae</taxon>
        <taxon>Aspergillus</taxon>
        <taxon>Aspergillus subgen. Circumdati</taxon>
    </lineage>
</organism>
<gene>
    <name evidence="6" type="primary">fluP</name>
    <name type="ORF">AFLA_114820</name>
</gene>
<comment type="function">
    <text evidence="5">Polyketide synthase; part of the gene cluster 41 that mediates the biosynthesis of an extracellular and diffusible metabolite that is able to stimulate colony sclerotial production (PubMed:27647242).</text>
</comment>
<comment type="induction">
    <text evidence="5">Expression is positively regulated by developmental regulators veA and velB but not by the global regulator of secondary metabolism laeA (PubMed:27647242).</text>
</comment>
<comment type="disruption phenotype">
    <text evidence="5">Reduces the production of sclerotia (PubMed:27647242).</text>
</comment>
<feature type="chain" id="PRO_0000438551" description="Cluster 41 polyketide synthase">
    <location>
        <begin position="1"/>
        <end position="1120"/>
    </location>
</feature>
<feature type="domain" description="Ketosynthase family 3 (KS3)" evidence="3">
    <location>
        <begin position="7"/>
        <end position="430"/>
    </location>
</feature>
<feature type="domain" description="Carrier" evidence="2">
    <location>
        <begin position="1042"/>
        <end position="1116"/>
    </location>
</feature>
<feature type="region of interest" description="Malonyl-CoA:ACP transacylase (MAT) domain" evidence="1">
    <location>
        <begin position="539"/>
        <end position="796"/>
    </location>
</feature>
<feature type="region of interest" description="Ketoreductase (KR) domain" evidence="1">
    <location>
        <begin position="804"/>
        <end position="943"/>
    </location>
</feature>
<feature type="active site" description="For beta-ketoacyl synthase activity" evidence="3">
    <location>
        <position position="178"/>
    </location>
</feature>
<feature type="active site" description="For beta-ketoacyl synthase activity" evidence="3">
    <location>
        <position position="313"/>
    </location>
</feature>
<feature type="active site" description="For beta-ketoacyl synthase activity" evidence="3">
    <location>
        <position position="353"/>
    </location>
</feature>
<feature type="active site" description="For acyl/malonyl transferase activity" evidence="4">
    <location>
        <position position="625"/>
    </location>
</feature>
<feature type="modified residue" description="O-(pantetheine 4'-phosphoryl)serine" evidence="2">
    <location>
        <position position="1076"/>
    </location>
</feature>
<proteinExistence type="evidence at transcript level"/>
<protein>
    <recommendedName>
        <fullName evidence="6">Cluster 41 polyketide synthase</fullName>
        <ecNumber evidence="7">2.3.1.-</ecNumber>
    </recommendedName>
</protein>
<accession>B8NYX0</accession>